<accession>Q8X7Q1</accession>
<evidence type="ECO:0000255" key="1">
    <source>
        <dbReference type="HAMAP-Rule" id="MF_01113"/>
    </source>
</evidence>
<name>DPO4_ECO57</name>
<keyword id="KW-0963">Cytoplasm</keyword>
<keyword id="KW-0227">DNA damage</keyword>
<keyword id="KW-0234">DNA repair</keyword>
<keyword id="KW-0235">DNA replication</keyword>
<keyword id="KW-0238">DNA-binding</keyword>
<keyword id="KW-0239">DNA-directed DNA polymerase</keyword>
<keyword id="KW-0460">Magnesium</keyword>
<keyword id="KW-0479">Metal-binding</keyword>
<keyword id="KW-0515">Mutator protein</keyword>
<keyword id="KW-0548">Nucleotidyltransferase</keyword>
<keyword id="KW-1185">Reference proteome</keyword>
<keyword id="KW-0808">Transferase</keyword>
<dbReference type="EC" id="2.7.7.7" evidence="1"/>
<dbReference type="EMBL" id="AE005174">
    <property type="protein sequence ID" value="AAG54556.1"/>
    <property type="molecule type" value="Genomic_DNA"/>
</dbReference>
<dbReference type="EMBL" id="BA000007">
    <property type="protein sequence ID" value="BAB33681.1"/>
    <property type="molecule type" value="Genomic_DNA"/>
</dbReference>
<dbReference type="PIR" id="B90661">
    <property type="entry name" value="B90661"/>
</dbReference>
<dbReference type="PIR" id="H85511">
    <property type="entry name" value="H85511"/>
</dbReference>
<dbReference type="RefSeq" id="NP_308285.1">
    <property type="nucleotide sequence ID" value="NC_002695.1"/>
</dbReference>
<dbReference type="RefSeq" id="WP_001226188.1">
    <property type="nucleotide sequence ID" value="NZ_SDVX01000001.1"/>
</dbReference>
<dbReference type="SMR" id="Q8X7Q1"/>
<dbReference type="STRING" id="155864.Z0292"/>
<dbReference type="GeneID" id="914349"/>
<dbReference type="KEGG" id="ece:Z0292"/>
<dbReference type="KEGG" id="ecs:ECs_0258"/>
<dbReference type="PATRIC" id="fig|386585.9.peg.360"/>
<dbReference type="eggNOG" id="COG0389">
    <property type="taxonomic scope" value="Bacteria"/>
</dbReference>
<dbReference type="HOGENOM" id="CLU_012348_1_2_6"/>
<dbReference type="Proteomes" id="UP000000558">
    <property type="component" value="Chromosome"/>
</dbReference>
<dbReference type="Proteomes" id="UP000002519">
    <property type="component" value="Chromosome"/>
</dbReference>
<dbReference type="GO" id="GO:0005829">
    <property type="term" value="C:cytosol"/>
    <property type="evidence" value="ECO:0007669"/>
    <property type="project" value="TreeGrafter"/>
</dbReference>
<dbReference type="GO" id="GO:0003684">
    <property type="term" value="F:damaged DNA binding"/>
    <property type="evidence" value="ECO:0007669"/>
    <property type="project" value="InterPro"/>
</dbReference>
<dbReference type="GO" id="GO:0003887">
    <property type="term" value="F:DNA-directed DNA polymerase activity"/>
    <property type="evidence" value="ECO:0007669"/>
    <property type="project" value="UniProtKB-UniRule"/>
</dbReference>
<dbReference type="GO" id="GO:0000287">
    <property type="term" value="F:magnesium ion binding"/>
    <property type="evidence" value="ECO:0007669"/>
    <property type="project" value="UniProtKB-UniRule"/>
</dbReference>
<dbReference type="GO" id="GO:0006261">
    <property type="term" value="P:DNA-templated DNA replication"/>
    <property type="evidence" value="ECO:0007669"/>
    <property type="project" value="UniProtKB-UniRule"/>
</dbReference>
<dbReference type="GO" id="GO:0042276">
    <property type="term" value="P:error-prone translesion synthesis"/>
    <property type="evidence" value="ECO:0007669"/>
    <property type="project" value="TreeGrafter"/>
</dbReference>
<dbReference type="GO" id="GO:0009432">
    <property type="term" value="P:SOS response"/>
    <property type="evidence" value="ECO:0007669"/>
    <property type="project" value="TreeGrafter"/>
</dbReference>
<dbReference type="CDD" id="cd03586">
    <property type="entry name" value="PolY_Pol_IV_kappa"/>
    <property type="match status" value="1"/>
</dbReference>
<dbReference type="FunFam" id="1.10.150.20:FF:000019">
    <property type="entry name" value="DNA polymerase IV"/>
    <property type="match status" value="1"/>
</dbReference>
<dbReference type="FunFam" id="3.30.1490.100:FF:000002">
    <property type="entry name" value="DNA polymerase IV"/>
    <property type="match status" value="1"/>
</dbReference>
<dbReference type="FunFam" id="3.30.70.270:FF:000002">
    <property type="entry name" value="DNA polymerase IV"/>
    <property type="match status" value="1"/>
</dbReference>
<dbReference type="FunFam" id="3.40.1170.60:FF:000001">
    <property type="entry name" value="DNA polymerase IV"/>
    <property type="match status" value="1"/>
</dbReference>
<dbReference type="Gene3D" id="3.30.70.270">
    <property type="match status" value="1"/>
</dbReference>
<dbReference type="Gene3D" id="3.40.1170.60">
    <property type="match status" value="1"/>
</dbReference>
<dbReference type="Gene3D" id="1.10.150.20">
    <property type="entry name" value="5' to 3' exonuclease, C-terminal subdomain"/>
    <property type="match status" value="1"/>
</dbReference>
<dbReference type="Gene3D" id="3.30.1490.100">
    <property type="entry name" value="DNA polymerase, Y-family, little finger domain"/>
    <property type="match status" value="1"/>
</dbReference>
<dbReference type="HAMAP" id="MF_01113">
    <property type="entry name" value="DNApol_IV"/>
    <property type="match status" value="1"/>
</dbReference>
<dbReference type="InterPro" id="IPR043502">
    <property type="entry name" value="DNA/RNA_pol_sf"/>
</dbReference>
<dbReference type="InterPro" id="IPR036775">
    <property type="entry name" value="DNA_pol_Y-fam_lit_finger_sf"/>
</dbReference>
<dbReference type="InterPro" id="IPR017961">
    <property type="entry name" value="DNA_pol_Y-fam_little_finger"/>
</dbReference>
<dbReference type="InterPro" id="IPR050116">
    <property type="entry name" value="DNA_polymerase-Y"/>
</dbReference>
<dbReference type="InterPro" id="IPR022880">
    <property type="entry name" value="DNApol_IV"/>
</dbReference>
<dbReference type="InterPro" id="IPR053848">
    <property type="entry name" value="IMS_HHH_1"/>
</dbReference>
<dbReference type="InterPro" id="IPR043128">
    <property type="entry name" value="Rev_trsase/Diguanyl_cyclase"/>
</dbReference>
<dbReference type="InterPro" id="IPR001126">
    <property type="entry name" value="UmuC"/>
</dbReference>
<dbReference type="NCBIfam" id="NF002677">
    <property type="entry name" value="PRK02406.1"/>
    <property type="match status" value="1"/>
</dbReference>
<dbReference type="PANTHER" id="PTHR11076:SF33">
    <property type="entry name" value="DNA POLYMERASE KAPPA"/>
    <property type="match status" value="1"/>
</dbReference>
<dbReference type="PANTHER" id="PTHR11076">
    <property type="entry name" value="DNA REPAIR POLYMERASE UMUC / TRANSFERASE FAMILY MEMBER"/>
    <property type="match status" value="1"/>
</dbReference>
<dbReference type="Pfam" id="PF00817">
    <property type="entry name" value="IMS"/>
    <property type="match status" value="1"/>
</dbReference>
<dbReference type="Pfam" id="PF11799">
    <property type="entry name" value="IMS_C"/>
    <property type="match status" value="1"/>
</dbReference>
<dbReference type="Pfam" id="PF21999">
    <property type="entry name" value="IMS_HHH_1"/>
    <property type="match status" value="1"/>
</dbReference>
<dbReference type="SUPFAM" id="SSF56672">
    <property type="entry name" value="DNA/RNA polymerases"/>
    <property type="match status" value="1"/>
</dbReference>
<dbReference type="SUPFAM" id="SSF100879">
    <property type="entry name" value="Lesion bypass DNA polymerase (Y-family), little finger domain"/>
    <property type="match status" value="1"/>
</dbReference>
<dbReference type="PROSITE" id="PS50173">
    <property type="entry name" value="UMUC"/>
    <property type="match status" value="1"/>
</dbReference>
<comment type="function">
    <text evidence="1">Poorly processive, error-prone DNA polymerase involved in untargeted mutagenesis. Copies undamaged DNA at stalled replication forks, which arise in vivo from mismatched or misaligned primer ends. These misaligned primers can be extended by PolIV. Exhibits no 3'-5' exonuclease (proofreading) activity. May be involved in translesional synthesis, in conjunction with the beta clamp from PolIII.</text>
</comment>
<comment type="catalytic activity">
    <reaction evidence="1">
        <text>DNA(n) + a 2'-deoxyribonucleoside 5'-triphosphate = DNA(n+1) + diphosphate</text>
        <dbReference type="Rhea" id="RHEA:22508"/>
        <dbReference type="Rhea" id="RHEA-COMP:17339"/>
        <dbReference type="Rhea" id="RHEA-COMP:17340"/>
        <dbReference type="ChEBI" id="CHEBI:33019"/>
        <dbReference type="ChEBI" id="CHEBI:61560"/>
        <dbReference type="ChEBI" id="CHEBI:173112"/>
        <dbReference type="EC" id="2.7.7.7"/>
    </reaction>
</comment>
<comment type="cofactor">
    <cofactor evidence="1">
        <name>Mg(2+)</name>
        <dbReference type="ChEBI" id="CHEBI:18420"/>
    </cofactor>
    <text evidence="1">Binds 2 magnesium ions per subunit.</text>
</comment>
<comment type="subunit">
    <text evidence="1">Monomer.</text>
</comment>
<comment type="subcellular location">
    <subcellularLocation>
        <location evidence="1">Cytoplasm</location>
    </subcellularLocation>
</comment>
<comment type="similarity">
    <text evidence="1">Belongs to the DNA polymerase type-Y family.</text>
</comment>
<gene>
    <name evidence="1" type="primary">dinB</name>
    <name type="synonym">dinP</name>
    <name type="ordered locus">Z0292</name>
    <name type="ordered locus">ECs0258</name>
</gene>
<protein>
    <recommendedName>
        <fullName evidence="1">DNA polymerase IV</fullName>
        <shortName evidence="1">Pol IV</shortName>
        <ecNumber evidence="1">2.7.7.7</ecNumber>
    </recommendedName>
</protein>
<organism>
    <name type="scientific">Escherichia coli O157:H7</name>
    <dbReference type="NCBI Taxonomy" id="83334"/>
    <lineage>
        <taxon>Bacteria</taxon>
        <taxon>Pseudomonadati</taxon>
        <taxon>Pseudomonadota</taxon>
        <taxon>Gammaproteobacteria</taxon>
        <taxon>Enterobacterales</taxon>
        <taxon>Enterobacteriaceae</taxon>
        <taxon>Escherichia</taxon>
    </lineage>
</organism>
<reference key="1">
    <citation type="journal article" date="2001" name="Nature">
        <title>Genome sequence of enterohaemorrhagic Escherichia coli O157:H7.</title>
        <authorList>
            <person name="Perna N.T."/>
            <person name="Plunkett G. III"/>
            <person name="Burland V."/>
            <person name="Mau B."/>
            <person name="Glasner J.D."/>
            <person name="Rose D.J."/>
            <person name="Mayhew G.F."/>
            <person name="Evans P.S."/>
            <person name="Gregor J."/>
            <person name="Kirkpatrick H.A."/>
            <person name="Posfai G."/>
            <person name="Hackett J."/>
            <person name="Klink S."/>
            <person name="Boutin A."/>
            <person name="Shao Y."/>
            <person name="Miller L."/>
            <person name="Grotbeck E.J."/>
            <person name="Davis N.W."/>
            <person name="Lim A."/>
            <person name="Dimalanta E.T."/>
            <person name="Potamousis K."/>
            <person name="Apodaca J."/>
            <person name="Anantharaman T.S."/>
            <person name="Lin J."/>
            <person name="Yen G."/>
            <person name="Schwartz D.C."/>
            <person name="Welch R.A."/>
            <person name="Blattner F.R."/>
        </authorList>
    </citation>
    <scope>NUCLEOTIDE SEQUENCE [LARGE SCALE GENOMIC DNA]</scope>
    <source>
        <strain>O157:H7 / EDL933 / ATCC 700927 / EHEC</strain>
    </source>
</reference>
<reference key="2">
    <citation type="journal article" date="2001" name="DNA Res.">
        <title>Complete genome sequence of enterohemorrhagic Escherichia coli O157:H7 and genomic comparison with a laboratory strain K-12.</title>
        <authorList>
            <person name="Hayashi T."/>
            <person name="Makino K."/>
            <person name="Ohnishi M."/>
            <person name="Kurokawa K."/>
            <person name="Ishii K."/>
            <person name="Yokoyama K."/>
            <person name="Han C.-G."/>
            <person name="Ohtsubo E."/>
            <person name="Nakayama K."/>
            <person name="Murata T."/>
            <person name="Tanaka M."/>
            <person name="Tobe T."/>
            <person name="Iida T."/>
            <person name="Takami H."/>
            <person name="Honda T."/>
            <person name="Sasakawa C."/>
            <person name="Ogasawara N."/>
            <person name="Yasunaga T."/>
            <person name="Kuhara S."/>
            <person name="Shiba T."/>
            <person name="Hattori M."/>
            <person name="Shinagawa H."/>
        </authorList>
    </citation>
    <scope>NUCLEOTIDE SEQUENCE [LARGE SCALE GENOMIC DNA]</scope>
    <source>
        <strain>O157:H7 / Sakai / RIMD 0509952 / EHEC</strain>
    </source>
</reference>
<sequence>MRKIIHVDMDCFFAAVEMRDNPALRDIPIAIGGSRERRGVISTANYPARKFGVRSAMPTGMALKLCPHLTLLPGRFDAYKEASNHIREIFSRYTSRIEPLSLDEAYLDVTDSVHCHGSATLIAQEIRQTIFSELQLTASAGVTPVKFLAKIASDMNKPNGQFVITPAEVSAFLQTLPLAKIPGVGKVSAAKLEAMGLRTCGDVQKCDLVILLKRFGKFGRILWERSQGIDERDVNSERLRKSVGVERTMAEDIHHWSECEAIIERLYPELERRLAKVKPDLLIARQGVKLKFDDFQQTTQEHVWPRLNKADLIATARKTWDERRGGRGVRLVGLHVTLLDPQMERQLVLGL</sequence>
<proteinExistence type="inferred from homology"/>
<feature type="chain" id="PRO_0000173914" description="DNA polymerase IV">
    <location>
        <begin position="1"/>
        <end position="351"/>
    </location>
</feature>
<feature type="domain" description="UmuC" evidence="1">
    <location>
        <begin position="4"/>
        <end position="185"/>
    </location>
</feature>
<feature type="active site" evidence="1">
    <location>
        <position position="104"/>
    </location>
</feature>
<feature type="binding site" evidence="1">
    <location>
        <position position="8"/>
    </location>
    <ligand>
        <name>Mg(2+)</name>
        <dbReference type="ChEBI" id="CHEBI:18420"/>
    </ligand>
</feature>
<feature type="binding site" evidence="1">
    <location>
        <position position="103"/>
    </location>
    <ligand>
        <name>Mg(2+)</name>
        <dbReference type="ChEBI" id="CHEBI:18420"/>
    </ligand>
</feature>
<feature type="site" description="Substrate discrimination" evidence="1">
    <location>
        <position position="13"/>
    </location>
</feature>